<accession>P32796</accession>
<accession>D6VZD3</accession>
<protein>
    <recommendedName>
        <fullName evidence="6">Carnitine O-acetyltransferase, mitochondrial</fullName>
        <shortName evidence="6">Carnitine acetylase</shortName>
        <ecNumber evidence="5">2.3.1.7</ecNumber>
    </recommendedName>
</protein>
<organism>
    <name type="scientific">Saccharomyces cerevisiae (strain ATCC 204508 / S288c)</name>
    <name type="common">Baker's yeast</name>
    <dbReference type="NCBI Taxonomy" id="559292"/>
    <lineage>
        <taxon>Eukaryota</taxon>
        <taxon>Fungi</taxon>
        <taxon>Dikarya</taxon>
        <taxon>Ascomycota</taxon>
        <taxon>Saccharomycotina</taxon>
        <taxon>Saccharomycetes</taxon>
        <taxon>Saccharomycetales</taxon>
        <taxon>Saccharomycetaceae</taxon>
        <taxon>Saccharomyces</taxon>
    </lineage>
</organism>
<feature type="transit peptide" description="Mitochondrion" evidence="2">
    <location>
        <begin position="1"/>
        <end status="unknown"/>
    </location>
</feature>
<feature type="chain" id="PRO_0000004431" description="Carnitine O-acetyltransferase, mitochondrial">
    <location>
        <begin status="unknown"/>
        <end position="670"/>
    </location>
</feature>
<feature type="short sequence motif" description="Microbody targeting signal" evidence="2">
    <location>
        <begin position="668"/>
        <end position="670"/>
    </location>
</feature>
<feature type="active site" description="Proton acceptor" evidence="1">
    <location>
        <position position="378"/>
    </location>
</feature>
<feature type="binding site" evidence="1">
    <location>
        <position position="461"/>
    </location>
    <ligand>
        <name>CoA</name>
        <dbReference type="ChEBI" id="CHEBI:57287"/>
    </ligand>
</feature>
<feature type="binding site" evidence="1">
    <location>
        <begin position="465"/>
        <end position="472"/>
    </location>
    <ligand>
        <name>CoA</name>
        <dbReference type="ChEBI" id="CHEBI:57287"/>
    </ligand>
</feature>
<feature type="binding site" evidence="1">
    <location>
        <position position="494"/>
    </location>
    <ligand>
        <name>(R)-carnitine</name>
        <dbReference type="ChEBI" id="CHEBI:16347"/>
    </ligand>
</feature>
<feature type="binding site" evidence="1">
    <location>
        <position position="498"/>
    </location>
    <ligand>
        <name>CoA</name>
        <dbReference type="ChEBI" id="CHEBI:57287"/>
    </ligand>
</feature>
<feature type="binding site" evidence="1">
    <location>
        <position position="507"/>
    </location>
    <ligand>
        <name>(R)-carnitine</name>
        <dbReference type="ChEBI" id="CHEBI:16347"/>
    </ligand>
</feature>
<feature type="binding site" evidence="1">
    <location>
        <position position="597"/>
    </location>
    <ligand>
        <name>CoA</name>
        <dbReference type="ChEBI" id="CHEBI:57287"/>
    </ligand>
</feature>
<feature type="splice variant" id="VSP_018690" description="In isoform Peroxisomal." evidence="7">
    <location>
        <begin position="1"/>
        <end position="22"/>
    </location>
</feature>
<feature type="sequence conflict" description="In Ref. 1; CAA78399." evidence="7" ref="1">
    <original>D</original>
    <variation>H</variation>
    <location>
        <position position="263"/>
    </location>
</feature>
<feature type="sequence conflict" description="In Ref. 1; CAA78399." evidence="7" ref="1">
    <original>L</original>
    <variation>M</variation>
    <location>
        <position position="308"/>
    </location>
</feature>
<name>CACP_YEAST</name>
<sequence>MRICHSRTLSNLKDLPITSRRAMHSAIVNYSTQKAQFPVETNNGEHYWAEKPNKFYQNKRPNFQGITFAKQQDLPSLPVPELKSTLDKYLQTIRPFCNDVETFERQQLLCKDFSEHMGPILQDRLKEYANDKRNWMAKFWDEQSYLQYNDPIVPYVSYFYSHMPLPNHLSKIDNDPLIKATAIISTVVKFIEAIKDESLPVEIIKGMPFCMNSFSLMFNTSRLPGKPEDNQDTNIFYSVYENNFVTIAYKGKFYKLMTHDGNDKPLSENEIWRQLYSVVFQGSQSDPKLGGIGSLTSLPRDQWREVHLELMKDPISQDSLETIHKSSFMLCLDLDQSPVTLEEKSRNCWHGDGINRFYDKSLQFLVTGNGSSGFLAEHSKMDGTPTLFLNNYVCQQLNKLDVDDFMRKVITPSSTVAMKPMELPFIITPKIHKAIESAQLQFKETIGEHDLRVWHYNKYGKTFIKRHGMSPDAFIQQVIQLAVFKYLKRQLPTYEAASTRKYFKGRTETGRSVSTASLEFVSKWQNGDVPIAEKIQALKHSAKEHSTYLKNAANGNGVDRHFFGLKNMLKSNDDQIPPLFKDPLFNYSSTWLISTSQLSSEYFDGYGWSQVNDNGFGLAYMLNNEWLHINIVNKPAKSGASVNRLHYYLSQAADEIFDALENENKRKAKL</sequence>
<evidence type="ECO:0000250" key="1">
    <source>
        <dbReference type="UniProtKB" id="P28329"/>
    </source>
</evidence>
<evidence type="ECO:0000255" key="2"/>
<evidence type="ECO:0000269" key="3">
    <source>
    </source>
</evidence>
<evidence type="ECO:0000269" key="4">
    <source>
    </source>
</evidence>
<evidence type="ECO:0000269" key="5">
    <source>
    </source>
</evidence>
<evidence type="ECO:0000303" key="6">
    <source>
    </source>
</evidence>
<evidence type="ECO:0000305" key="7"/>
<comment type="function">
    <text evidence="5">Carnitine acetylase is specific for short chain fatty acids. Carnitine acetylase seems to affect the flux through the pyruvate dehydrogenase complex. It may be involved as well in the transport of acetyl-CoA into mitochondria.</text>
</comment>
<comment type="catalytic activity">
    <reaction evidence="5">
        <text>(R)-carnitine + acetyl-CoA = O-acetyl-(R)-carnitine + CoA</text>
        <dbReference type="Rhea" id="RHEA:21136"/>
        <dbReference type="ChEBI" id="CHEBI:16347"/>
        <dbReference type="ChEBI" id="CHEBI:57287"/>
        <dbReference type="ChEBI" id="CHEBI:57288"/>
        <dbReference type="ChEBI" id="CHEBI:57589"/>
        <dbReference type="EC" id="2.3.1.7"/>
    </reaction>
</comment>
<comment type="subcellular location">
    <molecule>Isoform Mitochondrial</molecule>
    <subcellularLocation>
        <location>Mitochondrion inner membrane</location>
        <topology>Peripheral membrane protein</topology>
        <orientation evidence="4">Matrix side</orientation>
    </subcellularLocation>
</comment>
<comment type="subcellular location">
    <molecule>Isoform Peroxisomal</molecule>
    <subcellularLocation>
        <location evidence="4">Peroxisome</location>
    </subcellularLocation>
</comment>
<comment type="alternative products">
    <event type="alternative initiation"/>
    <isoform>
        <id>P32796-1</id>
        <name evidence="4">Mitochondrial</name>
        <sequence type="displayed"/>
    </isoform>
    <isoform>
        <id>P32796-2</id>
        <name evidence="4">Peroxisomal</name>
        <sequence type="described" ref="VSP_018690"/>
    </isoform>
</comment>
<comment type="induction">
    <text evidence="5">By ethanol (PubMed:8420957). Repressed by galactose (PubMed:8420957).</text>
</comment>
<comment type="miscellaneous">
    <text evidence="3">Present with 450 molecules/cell in log phase SD medium.</text>
</comment>
<comment type="miscellaneous">
    <molecule>Isoform Peroxisomal</molecule>
    <text evidence="7">Produced by alternative initiation at Met-23 of isoform Mitochondrial.</text>
</comment>
<comment type="similarity">
    <text evidence="7">Belongs to the carnitine/choline acetyltransferase family.</text>
</comment>
<keyword id="KW-0012">Acyltransferase</keyword>
<keyword id="KW-0024">Alternative initiation</keyword>
<keyword id="KW-0276">Fatty acid metabolism</keyword>
<keyword id="KW-0443">Lipid metabolism</keyword>
<keyword id="KW-0472">Membrane</keyword>
<keyword id="KW-0496">Mitochondrion</keyword>
<keyword id="KW-0999">Mitochondrion inner membrane</keyword>
<keyword id="KW-0576">Peroxisome</keyword>
<keyword id="KW-1185">Reference proteome</keyword>
<keyword id="KW-0808">Transferase</keyword>
<keyword id="KW-0809">Transit peptide</keyword>
<keyword id="KW-0813">Transport</keyword>
<reference key="1">
    <citation type="journal article" date="1993" name="J. Biol. Chem.">
        <title>Cloning and sequencing of a cDNA encoding Saccharomyces cerevisiae carnitine acetyltransferase. Use of the cDNA in gene disruption studies.</title>
        <authorList>
            <person name="Kispal G."/>
            <person name="Sumegi B."/>
            <person name="Dietmeier K."/>
            <person name="Bock I."/>
            <person name="Gajdos G."/>
            <person name="Tomcsanyi T."/>
            <person name="Sandor A."/>
        </authorList>
    </citation>
    <scope>NUCLEOTIDE SEQUENCE [GENOMIC DNA]</scope>
    <scope>FUNCTION</scope>
    <scope>CATALYTIC ACTIVITY</scope>
    <scope>INDUCTION</scope>
</reference>
<reference key="2">
    <citation type="journal article" date="1997" name="Nature">
        <title>The nucleotide sequence of Saccharomyces cerevisiae chromosome XIII.</title>
        <authorList>
            <person name="Bowman S."/>
            <person name="Churcher C.M."/>
            <person name="Badcock K."/>
            <person name="Brown D."/>
            <person name="Chillingworth T."/>
            <person name="Connor R."/>
            <person name="Dedman K."/>
            <person name="Devlin K."/>
            <person name="Gentles S."/>
            <person name="Hamlin N."/>
            <person name="Hunt S."/>
            <person name="Jagels K."/>
            <person name="Lye G."/>
            <person name="Moule S."/>
            <person name="Odell C."/>
            <person name="Pearson D."/>
            <person name="Rajandream M.A."/>
            <person name="Rice P."/>
            <person name="Skelton J."/>
            <person name="Walsh S.V."/>
            <person name="Whitehead S."/>
            <person name="Barrell B.G."/>
        </authorList>
    </citation>
    <scope>NUCLEOTIDE SEQUENCE [LARGE SCALE GENOMIC DNA]</scope>
    <source>
        <strain>ATCC 204508 / S288c</strain>
    </source>
</reference>
<reference key="3">
    <citation type="journal article" date="2014" name="G3 (Bethesda)">
        <title>The reference genome sequence of Saccharomyces cerevisiae: Then and now.</title>
        <authorList>
            <person name="Engel S.R."/>
            <person name="Dietrich F.S."/>
            <person name="Fisk D.G."/>
            <person name="Binkley G."/>
            <person name="Balakrishnan R."/>
            <person name="Costanzo M.C."/>
            <person name="Dwight S.S."/>
            <person name="Hitz B.C."/>
            <person name="Karra K."/>
            <person name="Nash R.S."/>
            <person name="Weng S."/>
            <person name="Wong E.D."/>
            <person name="Lloyd P."/>
            <person name="Skrzypek M.S."/>
            <person name="Miyasato S.R."/>
            <person name="Simison M."/>
            <person name="Cherry J.M."/>
        </authorList>
    </citation>
    <scope>GENOME REANNOTATION</scope>
    <source>
        <strain>ATCC 204508 / S288c</strain>
    </source>
</reference>
<reference key="4">
    <citation type="journal article" date="1995" name="EMBO J.">
        <title>Peroxisomal and mitochondrial carnitine acetyltransferases of Saccharomyces cerevisiae are encoded by a single gene.</title>
        <authorList>
            <person name="Elgersma Y."/>
            <person name="van Roermund C.W.T."/>
            <person name="Wanders R.J.A."/>
            <person name="Tabak H.F."/>
        </authorList>
    </citation>
    <scope>ALTERNATIVE INITIATION</scope>
    <scope>SUBCELLULAR LOCATION</scope>
</reference>
<reference key="5">
    <citation type="journal article" date="2003" name="Nature">
        <title>Global analysis of protein expression in yeast.</title>
        <authorList>
            <person name="Ghaemmaghami S."/>
            <person name="Huh W.-K."/>
            <person name="Bower K."/>
            <person name="Howson R.W."/>
            <person name="Belle A."/>
            <person name="Dephoure N."/>
            <person name="O'Shea E.K."/>
            <person name="Weissman J.S."/>
        </authorList>
    </citation>
    <scope>LEVEL OF PROTEIN EXPRESSION [LARGE SCALE ANALYSIS]</scope>
</reference>
<dbReference type="EC" id="2.3.1.7" evidence="5"/>
<dbReference type="EMBL" id="Z14021">
    <property type="protein sequence ID" value="CAA78399.1"/>
    <property type="molecule type" value="Genomic_DNA"/>
</dbReference>
<dbReference type="EMBL" id="Z48430">
    <property type="protein sequence ID" value="CAA88327.1"/>
    <property type="molecule type" value="Genomic_DNA"/>
</dbReference>
<dbReference type="EMBL" id="BK006946">
    <property type="protein sequence ID" value="DAA09857.1"/>
    <property type="molecule type" value="Genomic_DNA"/>
</dbReference>
<dbReference type="PIR" id="S52478">
    <property type="entry name" value="S52478"/>
</dbReference>
<dbReference type="RefSeq" id="NP_013670.1">
    <molecule id="P32796-1"/>
    <property type="nucleotide sequence ID" value="NM_001182400.1"/>
</dbReference>
<dbReference type="SMR" id="P32796"/>
<dbReference type="BioGRID" id="35127">
    <property type="interactions" value="92"/>
</dbReference>
<dbReference type="DIP" id="DIP-2476N"/>
<dbReference type="FunCoup" id="P32796">
    <property type="interactions" value="270"/>
</dbReference>
<dbReference type="IntAct" id="P32796">
    <property type="interactions" value="23"/>
</dbReference>
<dbReference type="STRING" id="4932.YML042W"/>
<dbReference type="PaxDb" id="4932-YML042W"/>
<dbReference type="PeptideAtlas" id="P32796"/>
<dbReference type="EnsemblFungi" id="YML042W_mRNA">
    <molecule id="P32796-1"/>
    <property type="protein sequence ID" value="YML042W"/>
    <property type="gene ID" value="YML042W"/>
</dbReference>
<dbReference type="GeneID" id="854965"/>
<dbReference type="KEGG" id="sce:YML042W"/>
<dbReference type="AGR" id="SGD:S000004506"/>
<dbReference type="SGD" id="S000004506">
    <property type="gene designation" value="CAT2"/>
</dbReference>
<dbReference type="VEuPathDB" id="FungiDB:YML042W"/>
<dbReference type="eggNOG" id="KOG3717">
    <property type="taxonomic scope" value="Eukaryota"/>
</dbReference>
<dbReference type="GeneTree" id="ENSGT01130000278297"/>
<dbReference type="HOGENOM" id="CLU_013513_5_1_1"/>
<dbReference type="InParanoid" id="P32796"/>
<dbReference type="OMA" id="KMDGTPT"/>
<dbReference type="OrthoDB" id="240216at2759"/>
<dbReference type="BioCyc" id="YEAST:YML042W-MONOMER"/>
<dbReference type="BRENDA" id="2.3.1.7">
    <property type="organism ID" value="984"/>
</dbReference>
<dbReference type="BioGRID-ORCS" id="854965">
    <property type="hits" value="0 hits in 10 CRISPR screens"/>
</dbReference>
<dbReference type="PRO" id="PR:P32796"/>
<dbReference type="Proteomes" id="UP000002311">
    <property type="component" value="Chromosome XIII"/>
</dbReference>
<dbReference type="RNAct" id="P32796">
    <property type="molecule type" value="protein"/>
</dbReference>
<dbReference type="GO" id="GO:0005743">
    <property type="term" value="C:mitochondrial inner membrane"/>
    <property type="evidence" value="ECO:0007669"/>
    <property type="project" value="UniProtKB-SubCell"/>
</dbReference>
<dbReference type="GO" id="GO:0005739">
    <property type="term" value="C:mitochondrion"/>
    <property type="evidence" value="ECO:0000314"/>
    <property type="project" value="SGD"/>
</dbReference>
<dbReference type="GO" id="GO:0005777">
    <property type="term" value="C:peroxisome"/>
    <property type="evidence" value="ECO:0000314"/>
    <property type="project" value="SGD"/>
</dbReference>
<dbReference type="GO" id="GO:0004092">
    <property type="term" value="F:carnitine O-acetyltransferase activity"/>
    <property type="evidence" value="ECO:0000315"/>
    <property type="project" value="SGD"/>
</dbReference>
<dbReference type="GO" id="GO:0009437">
    <property type="term" value="P:carnitine metabolic process"/>
    <property type="evidence" value="ECO:0000315"/>
    <property type="project" value="SGD"/>
</dbReference>
<dbReference type="GO" id="GO:0006631">
    <property type="term" value="P:fatty acid metabolic process"/>
    <property type="evidence" value="ECO:0007669"/>
    <property type="project" value="UniProtKB-KW"/>
</dbReference>
<dbReference type="FunFam" id="3.30.559.70:FF:000007">
    <property type="entry name" value="Carnitine O-acetyltransferase, mitochondrial"/>
    <property type="match status" value="1"/>
</dbReference>
<dbReference type="Gene3D" id="3.30.559.10">
    <property type="entry name" value="Chloramphenicol acetyltransferase-like domain"/>
    <property type="match status" value="1"/>
</dbReference>
<dbReference type="Gene3D" id="3.30.559.70">
    <property type="entry name" value="Choline/Carnitine o-acyltransferase, domain 2"/>
    <property type="match status" value="1"/>
</dbReference>
<dbReference type="InterPro" id="IPR000542">
    <property type="entry name" value="Carn_acyl_trans"/>
</dbReference>
<dbReference type="InterPro" id="IPR023213">
    <property type="entry name" value="CAT-like_dom_sf"/>
</dbReference>
<dbReference type="InterPro" id="IPR039551">
    <property type="entry name" value="Cho/carn_acyl_trans"/>
</dbReference>
<dbReference type="InterPro" id="IPR042231">
    <property type="entry name" value="Cho/carn_acyl_trans_2"/>
</dbReference>
<dbReference type="PANTHER" id="PTHR22589:SF103">
    <property type="entry name" value="CARNITINE O-ACETYL-TRANSFERASE, ISOFORM A-RELATED"/>
    <property type="match status" value="1"/>
</dbReference>
<dbReference type="PANTHER" id="PTHR22589">
    <property type="entry name" value="CARNITINE O-ACYLTRANSFERASE"/>
    <property type="match status" value="1"/>
</dbReference>
<dbReference type="Pfam" id="PF00755">
    <property type="entry name" value="Carn_acyltransf"/>
    <property type="match status" value="1"/>
</dbReference>
<dbReference type="SUPFAM" id="SSF52777">
    <property type="entry name" value="CoA-dependent acyltransferases"/>
    <property type="match status" value="2"/>
</dbReference>
<dbReference type="PROSITE" id="PS00439">
    <property type="entry name" value="ACYLTRANSF_C_1"/>
    <property type="match status" value="1"/>
</dbReference>
<dbReference type="PROSITE" id="PS00440">
    <property type="entry name" value="ACYLTRANSF_C_2"/>
    <property type="match status" value="1"/>
</dbReference>
<gene>
    <name type="primary">CAT2</name>
    <name type="synonym">CAT</name>
    <name type="synonym">YCAT</name>
    <name type="ordered locus">YML042W</name>
    <name type="ORF">YM8054.01</name>
</gene>
<proteinExistence type="evidence at protein level"/>